<keyword id="KW-0143">Chaperone</keyword>
<keyword id="KW-1185">Reference proteome</keyword>
<keyword id="KW-1188">Viral release from host cell</keyword>
<keyword id="KW-1245">Viral tail assembly</keyword>
<keyword id="KW-1246">Viral tail fiber assembly</keyword>
<feature type="chain" id="PRO_0000070310" description="Probable tail fiber assembly protein">
    <location>
        <begin position="1"/>
        <end position="175"/>
    </location>
</feature>
<reference key="1">
    <citation type="journal article" date="1992" name="J. Bacteriol.">
        <title>DNA sequences of the tail fiber genes of bacteriophage P2: evidence for horizontal transfer of tail fiber genes among unrelated bacteriophages.</title>
        <authorList>
            <person name="Haggaard-Ljungquist E."/>
            <person name="Halling C."/>
            <person name="Calendar R."/>
        </authorList>
    </citation>
    <scope>NUCLEOTIDE SEQUENCE [GENOMIC DNA]</scope>
</reference>
<gene>
    <name type="primary">G</name>
</gene>
<dbReference type="EMBL" id="AF063097">
    <property type="protein sequence ID" value="AAD03287.1"/>
    <property type="molecule type" value="Genomic_DNA"/>
</dbReference>
<dbReference type="PIR" id="C42291">
    <property type="entry name" value="C42291"/>
</dbReference>
<dbReference type="RefSeq" id="NP_046776.1">
    <property type="nucleotide sequence ID" value="NC_001895.1"/>
</dbReference>
<dbReference type="SMR" id="P26699"/>
<dbReference type="GeneID" id="77440811"/>
<dbReference type="KEGG" id="vg:77440811"/>
<dbReference type="Proteomes" id="UP000009092">
    <property type="component" value="Genome"/>
</dbReference>
<dbReference type="GO" id="GO:0098004">
    <property type="term" value="P:virus tail fiber assembly"/>
    <property type="evidence" value="ECO:0007669"/>
    <property type="project" value="UniProtKB-KW"/>
</dbReference>
<dbReference type="InterPro" id="IPR003458">
    <property type="entry name" value="Phage_T4_Gp38_tail_assem"/>
</dbReference>
<dbReference type="InterPro" id="IPR051220">
    <property type="entry name" value="TFA_Chaperone"/>
</dbReference>
<dbReference type="PANTHER" id="PTHR34413:SF2">
    <property type="entry name" value="PROPHAGE TAIL FIBER ASSEMBLY PROTEIN HOMOLOG TFAE-RELATED"/>
    <property type="match status" value="1"/>
</dbReference>
<dbReference type="PANTHER" id="PTHR34413">
    <property type="entry name" value="PROPHAGE TAIL FIBER ASSEMBLY PROTEIN HOMOLOG TFAE-RELATED-RELATED"/>
    <property type="match status" value="1"/>
</dbReference>
<dbReference type="Pfam" id="PF02413">
    <property type="entry name" value="Caudo_TAP"/>
    <property type="match status" value="1"/>
</dbReference>
<name>TFA_BPP2</name>
<sequence length="175" mass="20287">MQHLKNIKSGNPKTKEQYQLTKNFDVIWLWSEDGKNWYEEVKNFQPDTIKIVYDENNIIVAITRDASTLNPEGFSVVEVPDITSNRRADDSGKWMFKDGAVVKRIYTADEQQQQAESQKAALLSEAENVIQPLERAVRLNMATDEERARLESWERYSVLVSRVDPANPEWPEMPQ</sequence>
<organism>
    <name type="scientific">Escherichia phage P2</name>
    <name type="common">Bacteriophage P2</name>
    <dbReference type="NCBI Taxonomy" id="2905681"/>
    <lineage>
        <taxon>Viruses</taxon>
        <taxon>Duplodnaviria</taxon>
        <taxon>Heunggongvirae</taxon>
        <taxon>Uroviricota</taxon>
        <taxon>Caudoviricetes</taxon>
        <taxon>Peduoviridae</taxon>
        <taxon>Peduovirus</taxon>
        <taxon>Peduovirus P2</taxon>
    </lineage>
</organism>
<organismHost>
    <name type="scientific">Enterobacteriaceae</name>
    <dbReference type="NCBI Taxonomy" id="543"/>
</organismHost>
<evidence type="ECO:0000305" key="1"/>
<accession>P26699</accession>
<comment type="function">
    <text>Acts catalytically in the formation of tail protein dimers.</text>
</comment>
<comment type="similarity">
    <text evidence="1">Belongs to the tfa family.</text>
</comment>
<protein>
    <recommendedName>
        <fullName>Probable tail fiber assembly protein</fullName>
    </recommendedName>
    <alternativeName>
        <fullName>GpG</fullName>
    </alternativeName>
</protein>
<proteinExistence type="inferred from homology"/>